<keyword id="KW-1003">Cell membrane</keyword>
<keyword id="KW-0966">Cell projection</keyword>
<keyword id="KW-0968">Cytoplasmic vesicle</keyword>
<keyword id="KW-0342">GTP-binding</keyword>
<keyword id="KW-0378">Hydrolase</keyword>
<keyword id="KW-0449">Lipoprotein</keyword>
<keyword id="KW-0460">Magnesium</keyword>
<keyword id="KW-0472">Membrane</keyword>
<keyword id="KW-0479">Metal-binding</keyword>
<keyword id="KW-0488">Methylation</keyword>
<keyword id="KW-0547">Nucleotide-binding</keyword>
<keyword id="KW-0636">Prenylation</keyword>
<keyword id="KW-0653">Protein transport</keyword>
<keyword id="KW-1185">Reference proteome</keyword>
<keyword id="KW-0813">Transport</keyword>
<organism>
    <name type="scientific">Bos taurus</name>
    <name type="common">Bovine</name>
    <dbReference type="NCBI Taxonomy" id="9913"/>
    <lineage>
        <taxon>Eukaryota</taxon>
        <taxon>Metazoa</taxon>
        <taxon>Chordata</taxon>
        <taxon>Craniata</taxon>
        <taxon>Vertebrata</taxon>
        <taxon>Euteleostomi</taxon>
        <taxon>Mammalia</taxon>
        <taxon>Eutheria</taxon>
        <taxon>Laurasiatheria</taxon>
        <taxon>Artiodactyla</taxon>
        <taxon>Ruminantia</taxon>
        <taxon>Pecora</taxon>
        <taxon>Bovidae</taxon>
        <taxon>Bovinae</taxon>
        <taxon>Bos</taxon>
    </lineage>
</organism>
<sequence length="213" mass="23537">MGNRAEEDYNFVFKVVLIGESGVGKTNLLSRFTRNEFSHDSRTTIGVEFSTRTVMLGTAAIKAQIWDTAGLERYRAITSAYYRGAVGALLVFDLTKHQTYAVVERWLKELYDHAEATIVVMLVGNKSDLSQSREVPTEEARMFAENNGLLFLETSALDSTNVELAFETVLKEIFAKVSKQRQNNARTNAVTLGSGPAGQELGPGEKRACCISL</sequence>
<protein>
    <recommendedName>
        <fullName>Ras-related protein Rab-25</fullName>
        <ecNumber evidence="3">3.6.5.2</ecNumber>
    </recommendedName>
</protein>
<evidence type="ECO:0000250" key="1"/>
<evidence type="ECO:0000250" key="2">
    <source>
        <dbReference type="UniProtKB" id="E2RQ15"/>
    </source>
</evidence>
<evidence type="ECO:0000250" key="3">
    <source>
        <dbReference type="UniProtKB" id="P46629"/>
    </source>
</evidence>
<evidence type="ECO:0000250" key="4">
    <source>
        <dbReference type="UniProtKB" id="P57735"/>
    </source>
</evidence>
<evidence type="ECO:0000250" key="5">
    <source>
        <dbReference type="UniProtKB" id="P61106"/>
    </source>
</evidence>
<evidence type="ECO:0000250" key="6">
    <source>
        <dbReference type="UniProtKB" id="P62820"/>
    </source>
</evidence>
<evidence type="ECO:0000250" key="7">
    <source>
        <dbReference type="UniProtKB" id="Q9WTL2"/>
    </source>
</evidence>
<evidence type="ECO:0000255" key="8"/>
<evidence type="ECO:0000305" key="9"/>
<reference key="1">
    <citation type="journal article" date="2005" name="BMC Genomics">
        <title>Characterization of 954 bovine full-CDS cDNA sequences.</title>
        <authorList>
            <person name="Harhay G.P."/>
            <person name="Sonstegard T.S."/>
            <person name="Keele J.W."/>
            <person name="Heaton M.P."/>
            <person name="Clawson M.L."/>
            <person name="Snelling W.M."/>
            <person name="Wiedmann R.T."/>
            <person name="Van Tassell C.P."/>
            <person name="Smith T.P.L."/>
        </authorList>
    </citation>
    <scope>NUCLEOTIDE SEQUENCE [LARGE SCALE MRNA]</scope>
</reference>
<reference key="2">
    <citation type="submission" date="2006-08" db="EMBL/GenBank/DDBJ databases">
        <authorList>
            <consortium name="NIH - Mammalian Gene Collection (MGC) project"/>
        </authorList>
    </citation>
    <scope>NUCLEOTIDE SEQUENCE [LARGE SCALE MRNA]</scope>
    <source>
        <strain>Hereford</strain>
        <tissue>Fetal lung</tissue>
    </source>
</reference>
<proteinExistence type="evidence at transcript level"/>
<dbReference type="EC" id="3.6.5.2" evidence="3"/>
<dbReference type="EMBL" id="BT021481">
    <property type="protein sequence ID" value="AAX46328.1"/>
    <property type="molecule type" value="mRNA"/>
</dbReference>
<dbReference type="EMBL" id="BC120091">
    <property type="protein sequence ID" value="AAI20092.1"/>
    <property type="molecule type" value="mRNA"/>
</dbReference>
<dbReference type="RefSeq" id="NP_001017936.1">
    <property type="nucleotide sequence ID" value="NM_001017936.1"/>
</dbReference>
<dbReference type="SMR" id="Q58DW6"/>
<dbReference type="FunCoup" id="Q58DW6">
    <property type="interactions" value="127"/>
</dbReference>
<dbReference type="STRING" id="9913.ENSBTAP00000025170"/>
<dbReference type="PaxDb" id="9913-ENSBTAP00000025170"/>
<dbReference type="Ensembl" id="ENSBTAT00000025170.3">
    <property type="protein sequence ID" value="ENSBTAP00000025170.1"/>
    <property type="gene ID" value="ENSBTAG00000018914.6"/>
</dbReference>
<dbReference type="GeneID" id="506482"/>
<dbReference type="KEGG" id="bta:506482"/>
<dbReference type="CTD" id="57111"/>
<dbReference type="VEuPathDB" id="HostDB:ENSBTAG00000018914"/>
<dbReference type="VGNC" id="VGNC:33632">
    <property type="gene designation" value="RAB25"/>
</dbReference>
<dbReference type="eggNOG" id="KOG0087">
    <property type="taxonomic scope" value="Eukaryota"/>
</dbReference>
<dbReference type="GeneTree" id="ENSGT00940000158230"/>
<dbReference type="HOGENOM" id="CLU_041217_23_0_1"/>
<dbReference type="InParanoid" id="Q58DW6"/>
<dbReference type="OMA" id="KRACCIN"/>
<dbReference type="OrthoDB" id="9989112at2759"/>
<dbReference type="TreeFam" id="TF300099"/>
<dbReference type="Reactome" id="R-BTA-8873719">
    <property type="pathway name" value="RAB geranylgeranylation"/>
</dbReference>
<dbReference type="Proteomes" id="UP000009136">
    <property type="component" value="Chromosome 3"/>
</dbReference>
<dbReference type="Bgee" id="ENSBTAG00000018914">
    <property type="expression patterns" value="Expressed in surface of tongue and 78 other cell types or tissues"/>
</dbReference>
<dbReference type="GO" id="GO:0031410">
    <property type="term" value="C:cytoplasmic vesicle"/>
    <property type="evidence" value="ECO:0000250"/>
    <property type="project" value="UniProtKB"/>
</dbReference>
<dbReference type="GO" id="GO:0005794">
    <property type="term" value="C:Golgi apparatus"/>
    <property type="evidence" value="ECO:0000318"/>
    <property type="project" value="GO_Central"/>
</dbReference>
<dbReference type="GO" id="GO:0031143">
    <property type="term" value="C:pseudopodium"/>
    <property type="evidence" value="ECO:0000250"/>
    <property type="project" value="UniProtKB"/>
</dbReference>
<dbReference type="GO" id="GO:0031260">
    <property type="term" value="C:pseudopodium membrane"/>
    <property type="evidence" value="ECO:0007669"/>
    <property type="project" value="UniProtKB-SubCell"/>
</dbReference>
<dbReference type="GO" id="GO:0055037">
    <property type="term" value="C:recycling endosome"/>
    <property type="evidence" value="ECO:0000318"/>
    <property type="project" value="GO_Central"/>
</dbReference>
<dbReference type="GO" id="GO:0003925">
    <property type="term" value="F:G protein activity"/>
    <property type="evidence" value="ECO:0000250"/>
    <property type="project" value="UniProtKB"/>
</dbReference>
<dbReference type="GO" id="GO:0005525">
    <property type="term" value="F:GTP binding"/>
    <property type="evidence" value="ECO:0000318"/>
    <property type="project" value="GO_Central"/>
</dbReference>
<dbReference type="GO" id="GO:0003924">
    <property type="term" value="F:GTPase activity"/>
    <property type="evidence" value="ECO:0000318"/>
    <property type="project" value="GO_Central"/>
</dbReference>
<dbReference type="GO" id="GO:0031489">
    <property type="term" value="F:myosin V binding"/>
    <property type="evidence" value="ECO:0007669"/>
    <property type="project" value="Ensembl"/>
</dbReference>
<dbReference type="GO" id="GO:0003382">
    <property type="term" value="P:epithelial cell morphogenesis"/>
    <property type="evidence" value="ECO:0000250"/>
    <property type="project" value="UniProtKB"/>
</dbReference>
<dbReference type="GO" id="GO:0006887">
    <property type="term" value="P:exocytosis"/>
    <property type="evidence" value="ECO:0000318"/>
    <property type="project" value="GO_Central"/>
</dbReference>
<dbReference type="GO" id="GO:0008284">
    <property type="term" value="P:positive regulation of cell population proliferation"/>
    <property type="evidence" value="ECO:0000250"/>
    <property type="project" value="UniProtKB"/>
</dbReference>
<dbReference type="GO" id="GO:0010634">
    <property type="term" value="P:positive regulation of epithelial cell migration"/>
    <property type="evidence" value="ECO:0007669"/>
    <property type="project" value="Ensembl"/>
</dbReference>
<dbReference type="GO" id="GO:0015031">
    <property type="term" value="P:protein transport"/>
    <property type="evidence" value="ECO:0007669"/>
    <property type="project" value="UniProtKB-KW"/>
</dbReference>
<dbReference type="GO" id="GO:0031268">
    <property type="term" value="P:pseudopodium organization"/>
    <property type="evidence" value="ECO:0000250"/>
    <property type="project" value="UniProtKB"/>
</dbReference>
<dbReference type="GO" id="GO:0060627">
    <property type="term" value="P:regulation of vesicle-mediated transport"/>
    <property type="evidence" value="ECO:0007669"/>
    <property type="project" value="Ensembl"/>
</dbReference>
<dbReference type="CDD" id="cd01868">
    <property type="entry name" value="Rab11_like"/>
    <property type="match status" value="1"/>
</dbReference>
<dbReference type="FunFam" id="3.40.50.300:FF:000067">
    <property type="entry name" value="ras-related protein RABA1f"/>
    <property type="match status" value="1"/>
</dbReference>
<dbReference type="Gene3D" id="3.40.50.300">
    <property type="entry name" value="P-loop containing nucleotide triphosphate hydrolases"/>
    <property type="match status" value="1"/>
</dbReference>
<dbReference type="InterPro" id="IPR027417">
    <property type="entry name" value="P-loop_NTPase"/>
</dbReference>
<dbReference type="InterPro" id="IPR050209">
    <property type="entry name" value="Rab_GTPases_membrane_traffic"/>
</dbReference>
<dbReference type="InterPro" id="IPR005225">
    <property type="entry name" value="Small_GTP-bd"/>
</dbReference>
<dbReference type="InterPro" id="IPR001806">
    <property type="entry name" value="Small_GTPase"/>
</dbReference>
<dbReference type="NCBIfam" id="TIGR00231">
    <property type="entry name" value="small_GTP"/>
    <property type="match status" value="1"/>
</dbReference>
<dbReference type="PANTHER" id="PTHR47979">
    <property type="entry name" value="DRAB11-RELATED"/>
    <property type="match status" value="1"/>
</dbReference>
<dbReference type="Pfam" id="PF00071">
    <property type="entry name" value="Ras"/>
    <property type="match status" value="1"/>
</dbReference>
<dbReference type="PRINTS" id="PR00449">
    <property type="entry name" value="RASTRNSFRMNG"/>
</dbReference>
<dbReference type="SMART" id="SM00175">
    <property type="entry name" value="RAB"/>
    <property type="match status" value="1"/>
</dbReference>
<dbReference type="SMART" id="SM00176">
    <property type="entry name" value="RAN"/>
    <property type="match status" value="1"/>
</dbReference>
<dbReference type="SMART" id="SM00173">
    <property type="entry name" value="RAS"/>
    <property type="match status" value="1"/>
</dbReference>
<dbReference type="SMART" id="SM00174">
    <property type="entry name" value="RHO"/>
    <property type="match status" value="1"/>
</dbReference>
<dbReference type="SUPFAM" id="SSF52540">
    <property type="entry name" value="P-loop containing nucleoside triphosphate hydrolases"/>
    <property type="match status" value="1"/>
</dbReference>
<dbReference type="PROSITE" id="PS51419">
    <property type="entry name" value="RAB"/>
    <property type="match status" value="1"/>
</dbReference>
<name>RAB25_BOVIN</name>
<comment type="function">
    <text evidence="2 3 4 5 7">The small GTPases Rab are key regulators of intracellular membrane trafficking, from the formation of transport vesicles to their fusion with membranes. Rabs cycle between an inactive GDP-bound form and an active GTP-bound form that is able to recruit to membranes different set of downstream effectors directly responsible for vesicle formation, movement, tethering and fusion (By similarity). RAB25 regulates epithelial cell differentiation, proliferation and survival, thereby playing key roles in tumorigenesis. Promotes invasive migration of cells in which it functions to localize and maintain integrin alpha-V/beta-1 at the tips of extending pseudopodia (By similarity). Involved in the regulation of epithelial morphogenesis through the control of CLDN4 expression and localization at tight junctions (By similarity). May selectively regulate the apical recycling pathway (By similarity). Together with MYO5B regulates transcytosis (By similarity).</text>
</comment>
<comment type="catalytic activity">
    <reaction evidence="3">
        <text>GTP + H2O = GDP + phosphate + H(+)</text>
        <dbReference type="Rhea" id="RHEA:19669"/>
        <dbReference type="ChEBI" id="CHEBI:15377"/>
        <dbReference type="ChEBI" id="CHEBI:15378"/>
        <dbReference type="ChEBI" id="CHEBI:37565"/>
        <dbReference type="ChEBI" id="CHEBI:43474"/>
        <dbReference type="ChEBI" id="CHEBI:58189"/>
        <dbReference type="EC" id="3.6.5.2"/>
    </reaction>
    <physiologicalReaction direction="left-to-right" evidence="3">
        <dbReference type="Rhea" id="RHEA:19670"/>
    </physiologicalReaction>
</comment>
<comment type="cofactor">
    <cofactor evidence="4">
        <name>Mg(2+)</name>
        <dbReference type="ChEBI" id="CHEBI:18420"/>
    </cofactor>
</comment>
<comment type="activity regulation">
    <text evidence="4">Regulated by guanine nucleotide exchange factors (GEFs) which promote the exchange of bound GDP for free GTP. Regulated by GTPase activating proteins (GAPs) which increase the GTP hydrolysis activity. Inhibited by GDP dissociation inhibitors (GDIs) which prevent Rab-GDP dissociation.</text>
</comment>
<comment type="subunit">
    <text evidence="4">Interacts (GTP-bound form) with RAB11FIP1, RAB11FIP2, RAB11FIP3 and RAB11FIP4. Interacts (via the hypervariable C-terminal region) with ITGB1 (via the cytoplasmic region); the interaction is GTP-dependent. Interacts with ITGAV. Associates with the integrin alpha-V/beta-1 heterodimer. Interacts with VPS33B.</text>
</comment>
<comment type="subcellular location">
    <subcellularLocation>
        <location evidence="9">Cell membrane</location>
        <topology evidence="9">Lipid-anchor</topology>
        <orientation evidence="9">Cytoplasmic side</orientation>
    </subcellularLocation>
    <subcellularLocation>
        <location evidence="4">Cell projection</location>
        <location evidence="4">Pseudopodium membrane</location>
    </subcellularLocation>
    <subcellularLocation>
        <location evidence="4">Cytoplasmic vesicle</location>
    </subcellularLocation>
    <text evidence="3 4">Colocalizes with integrin alpha-V/beta-1 in vesicles at the pseudopodial tips. Colocalizes with RAB11A in subapical vesicles (By similarity).</text>
</comment>
<comment type="domain">
    <text evidence="6">Switch 1, switch 2 and the interswitch regions are characteristic of Rab GTPases and mediate the interactions with Rab downstream effectors. The switch regions undergo conformational changes upon nucleotide binding which drive interaction with specific sets of effector proteins, with most effectors only binding to GTP-bound Rab.</text>
</comment>
<comment type="similarity">
    <text evidence="9">Belongs to the small GTPase superfamily. Rab family.</text>
</comment>
<feature type="chain" id="PRO_0000244429" description="Ras-related protein Rab-25">
    <location>
        <begin position="1"/>
        <end position="210"/>
    </location>
</feature>
<feature type="propeptide" id="PRO_0000370773" description="Removed in mature form" evidence="8">
    <location>
        <begin position="211"/>
        <end position="213"/>
    </location>
</feature>
<feature type="short sequence motif" description="Switch 1" evidence="6">
    <location>
        <begin position="35"/>
        <end position="49"/>
    </location>
</feature>
<feature type="short sequence motif" description="Switch 2" evidence="6">
    <location>
        <begin position="67"/>
        <end position="84"/>
    </location>
</feature>
<feature type="binding site" evidence="4">
    <location>
        <position position="21"/>
    </location>
    <ligand>
        <name>GTP</name>
        <dbReference type="ChEBI" id="CHEBI:37565"/>
    </ligand>
</feature>
<feature type="binding site" evidence="4">
    <location>
        <position position="24"/>
    </location>
    <ligand>
        <name>GTP</name>
        <dbReference type="ChEBI" id="CHEBI:37565"/>
    </ligand>
</feature>
<feature type="binding site" evidence="4">
    <location>
        <position position="25"/>
    </location>
    <ligand>
        <name>GTP</name>
        <dbReference type="ChEBI" id="CHEBI:37565"/>
    </ligand>
</feature>
<feature type="binding site" evidence="4">
    <location>
        <position position="26"/>
    </location>
    <ligand>
        <name>GTP</name>
        <dbReference type="ChEBI" id="CHEBI:37565"/>
    </ligand>
</feature>
<feature type="binding site" evidence="4">
    <location>
        <position position="26"/>
    </location>
    <ligand>
        <name>Mg(2+)</name>
        <dbReference type="ChEBI" id="CHEBI:18420"/>
    </ligand>
</feature>
<feature type="binding site" evidence="4">
    <location>
        <position position="27"/>
    </location>
    <ligand>
        <name>GTP</name>
        <dbReference type="ChEBI" id="CHEBI:37565"/>
    </ligand>
</feature>
<feature type="binding site" evidence="4">
    <location>
        <position position="38"/>
    </location>
    <ligand>
        <name>GTP</name>
        <dbReference type="ChEBI" id="CHEBI:37565"/>
    </ligand>
</feature>
<feature type="binding site" evidence="4">
    <location>
        <position position="39"/>
    </location>
    <ligand>
        <name>GTP</name>
        <dbReference type="ChEBI" id="CHEBI:37565"/>
    </ligand>
</feature>
<feature type="binding site" evidence="4">
    <location>
        <position position="43"/>
    </location>
    <ligand>
        <name>GTP</name>
        <dbReference type="ChEBI" id="CHEBI:37565"/>
    </ligand>
</feature>
<feature type="binding site" evidence="4">
    <location>
        <position position="44"/>
    </location>
    <ligand>
        <name>GTP</name>
        <dbReference type="ChEBI" id="CHEBI:37565"/>
    </ligand>
</feature>
<feature type="binding site" evidence="4">
    <location>
        <position position="44"/>
    </location>
    <ligand>
        <name>Mg(2+)</name>
        <dbReference type="ChEBI" id="CHEBI:18420"/>
    </ligand>
</feature>
<feature type="binding site" evidence="4">
    <location>
        <position position="67"/>
    </location>
    <ligand>
        <name>Mg(2+)</name>
        <dbReference type="ChEBI" id="CHEBI:18420"/>
    </ligand>
</feature>
<feature type="binding site" evidence="4">
    <location>
        <position position="70"/>
    </location>
    <ligand>
        <name>GTP</name>
        <dbReference type="ChEBI" id="CHEBI:37565"/>
    </ligand>
</feature>
<feature type="binding site" evidence="4">
    <location>
        <position position="125"/>
    </location>
    <ligand>
        <name>GTP</name>
        <dbReference type="ChEBI" id="CHEBI:37565"/>
    </ligand>
</feature>
<feature type="binding site" evidence="4">
    <location>
        <position position="126"/>
    </location>
    <ligand>
        <name>GTP</name>
        <dbReference type="ChEBI" id="CHEBI:37565"/>
    </ligand>
</feature>
<feature type="binding site" evidence="4">
    <location>
        <position position="128"/>
    </location>
    <ligand>
        <name>GTP</name>
        <dbReference type="ChEBI" id="CHEBI:37565"/>
    </ligand>
</feature>
<feature type="binding site" evidence="4">
    <location>
        <position position="156"/>
    </location>
    <ligand>
        <name>GTP</name>
        <dbReference type="ChEBI" id="CHEBI:37565"/>
    </ligand>
</feature>
<feature type="binding site" evidence="4">
    <location>
        <position position="157"/>
    </location>
    <ligand>
        <name>GTP</name>
        <dbReference type="ChEBI" id="CHEBI:37565"/>
    </ligand>
</feature>
<feature type="modified residue" description="Cysteine methyl ester" evidence="8">
    <location>
        <position position="210"/>
    </location>
</feature>
<feature type="lipid moiety-binding region" description="S-geranylgeranyl cysteine" evidence="1">
    <location>
        <position position="209"/>
    </location>
</feature>
<feature type="lipid moiety-binding region" description="S-geranylgeranyl cysteine" evidence="1">
    <location>
        <position position="210"/>
    </location>
</feature>
<feature type="sequence conflict" description="In Ref. 2; AAI20092." evidence="9" ref="2">
    <original>T</original>
    <variation>I</variation>
    <location>
        <position position="191"/>
    </location>
</feature>
<accession>Q58DW6</accession>
<accession>Q0VCM9</accession>
<gene>
    <name type="primary">RAB25</name>
</gene>